<feature type="chain" id="PRO_0000078011" description="Uncharacterized protein HI_1241">
    <location>
        <begin position="1"/>
        <end position="266"/>
    </location>
</feature>
<feature type="transmembrane region" description="Helical" evidence="1">
    <location>
        <begin position="9"/>
        <end position="29"/>
    </location>
</feature>
<feature type="transmembrane region" description="Helical" evidence="1">
    <location>
        <begin position="37"/>
        <end position="57"/>
    </location>
</feature>
<feature type="transmembrane region" description="Helical" evidence="1">
    <location>
        <begin position="69"/>
        <end position="89"/>
    </location>
</feature>
<feature type="transmembrane region" description="Helical" evidence="1">
    <location>
        <begin position="123"/>
        <end position="143"/>
    </location>
</feature>
<feature type="transmembrane region" description="Helical" evidence="1">
    <location>
        <begin position="153"/>
        <end position="173"/>
    </location>
</feature>
<feature type="transmembrane region" description="Helical" evidence="1">
    <location>
        <begin position="184"/>
        <end position="204"/>
    </location>
</feature>
<feature type="transmembrane region" description="Helical" evidence="1">
    <location>
        <begin position="216"/>
        <end position="236"/>
    </location>
</feature>
<feature type="transmembrane region" description="Helical" evidence="1">
    <location>
        <begin position="246"/>
        <end position="266"/>
    </location>
</feature>
<keyword id="KW-1003">Cell membrane</keyword>
<keyword id="KW-0472">Membrane</keyword>
<keyword id="KW-1185">Reference proteome</keyword>
<keyword id="KW-0812">Transmembrane</keyword>
<keyword id="KW-1133">Transmembrane helix</keyword>
<comment type="subcellular location">
    <subcellularLocation>
        <location evidence="2">Cell membrane</location>
        <topology evidence="2">Multi-pass membrane protein</topology>
    </subcellularLocation>
</comment>
<dbReference type="EMBL" id="L42023">
    <property type="protein sequence ID" value="AAC22898.1"/>
    <property type="molecule type" value="Genomic_DNA"/>
</dbReference>
<dbReference type="PIR" id="G64022">
    <property type="entry name" value="G64022"/>
</dbReference>
<dbReference type="RefSeq" id="NP_439397.1">
    <property type="nucleotide sequence ID" value="NC_000907.1"/>
</dbReference>
<dbReference type="STRING" id="71421.HI_1241"/>
<dbReference type="EnsemblBacteria" id="AAC22898">
    <property type="protein sequence ID" value="AAC22898"/>
    <property type="gene ID" value="HI_1241"/>
</dbReference>
<dbReference type="KEGG" id="hin:HI_1241"/>
<dbReference type="PATRIC" id="fig|71421.8.peg.1293"/>
<dbReference type="eggNOG" id="ENOG5032VT8">
    <property type="taxonomic scope" value="Bacteria"/>
</dbReference>
<dbReference type="HOGENOM" id="CLU_1033033_0_0_6"/>
<dbReference type="OrthoDB" id="5915482at2"/>
<dbReference type="BioCyc" id="HINF71421:G1GJ1-1271-MONOMER"/>
<dbReference type="Proteomes" id="UP000000579">
    <property type="component" value="Chromosome"/>
</dbReference>
<dbReference type="GO" id="GO:0005886">
    <property type="term" value="C:plasma membrane"/>
    <property type="evidence" value="ECO:0007669"/>
    <property type="project" value="UniProtKB-SubCell"/>
</dbReference>
<gene>
    <name type="ordered locus">HI_1241</name>
</gene>
<proteinExistence type="predicted"/>
<evidence type="ECO:0000255" key="1"/>
<evidence type="ECO:0000305" key="2"/>
<reference key="1">
    <citation type="journal article" date="1995" name="Science">
        <title>Whole-genome random sequencing and assembly of Haemophilus influenzae Rd.</title>
        <authorList>
            <person name="Fleischmann R.D."/>
            <person name="Adams M.D."/>
            <person name="White O."/>
            <person name="Clayton R.A."/>
            <person name="Kirkness E.F."/>
            <person name="Kerlavage A.R."/>
            <person name="Bult C.J."/>
            <person name="Tomb J.-F."/>
            <person name="Dougherty B.A."/>
            <person name="Merrick J.M."/>
            <person name="McKenney K."/>
            <person name="Sutton G.G."/>
            <person name="FitzHugh W."/>
            <person name="Fields C.A."/>
            <person name="Gocayne J.D."/>
            <person name="Scott J.D."/>
            <person name="Shirley R."/>
            <person name="Liu L.-I."/>
            <person name="Glodek A."/>
            <person name="Kelley J.M."/>
            <person name="Weidman J.F."/>
            <person name="Phillips C.A."/>
            <person name="Spriggs T."/>
            <person name="Hedblom E."/>
            <person name="Cotton M.D."/>
            <person name="Utterback T.R."/>
            <person name="Hanna M.C."/>
            <person name="Nguyen D.T."/>
            <person name="Saudek D.M."/>
            <person name="Brandon R.C."/>
            <person name="Fine L.D."/>
            <person name="Fritchman J.L."/>
            <person name="Fuhrmann J.L."/>
            <person name="Geoghagen N.S.M."/>
            <person name="Gnehm C.L."/>
            <person name="McDonald L.A."/>
            <person name="Small K.V."/>
            <person name="Fraser C.M."/>
            <person name="Smith H.O."/>
            <person name="Venter J.C."/>
        </authorList>
    </citation>
    <scope>NUCLEOTIDE SEQUENCE [LARGE SCALE GENOMIC DNA]</scope>
    <source>
        <strain>ATCC 51907 / DSM 11121 / KW20 / Rd</strain>
    </source>
</reference>
<sequence>MSEQSSKYIAALLAVLSISMVLGIDLFIFSLQSEKQTMPHLGVGVLVAQLISLLVFYRGEICPGQRGRLIKVNMTFAIYWAVWLLISLLQNNHTLTNVMSVCGLSVVYFIWKQPKTEKIRNSFLLMAALIAGLGCLSYLMIFTELPASDFAEYNPFAPILSGVILANLVLVIARNRLQGFIALLPLAMIILLALNALAMFLFLLLNGMESAVNSESVFAYIIYFVCHFVIAAILILHSFQKWTLSTNSLFILLFIAVCLPLWMVFV</sequence>
<organism>
    <name type="scientific">Haemophilus influenzae (strain ATCC 51907 / DSM 11121 / KW20 / Rd)</name>
    <dbReference type="NCBI Taxonomy" id="71421"/>
    <lineage>
        <taxon>Bacteria</taxon>
        <taxon>Pseudomonadati</taxon>
        <taxon>Pseudomonadota</taxon>
        <taxon>Gammaproteobacteria</taxon>
        <taxon>Pasteurellales</taxon>
        <taxon>Pasteurellaceae</taxon>
        <taxon>Haemophilus</taxon>
    </lineage>
</organism>
<protein>
    <recommendedName>
        <fullName>Uncharacterized protein HI_1241</fullName>
    </recommendedName>
</protein>
<name>Y1241_HAEIN</name>
<accession>P44133</accession>